<name>PSBA_CUSRE</name>
<geneLocation type="plastid"/>
<dbReference type="EC" id="1.10.3.9" evidence="1"/>
<dbReference type="EMBL" id="X67512">
    <property type="protein sequence ID" value="CAA47847.1"/>
    <property type="molecule type" value="Genomic_DNA"/>
</dbReference>
<dbReference type="EMBL" id="AM711640">
    <property type="protein sequence ID" value="CAM98375.1"/>
    <property type="molecule type" value="Genomic_DNA"/>
</dbReference>
<dbReference type="PIR" id="S33912">
    <property type="entry name" value="S33912"/>
</dbReference>
<dbReference type="RefSeq" id="YP_001430089.1">
    <property type="nucleotide sequence ID" value="NC_009766.1"/>
</dbReference>
<dbReference type="SMR" id="P32036"/>
<dbReference type="GeneID" id="5536641"/>
<dbReference type="GO" id="GO:0009535">
    <property type="term" value="C:chloroplast thylakoid membrane"/>
    <property type="evidence" value="ECO:0007669"/>
    <property type="project" value="TreeGrafter"/>
</dbReference>
<dbReference type="GO" id="GO:0009523">
    <property type="term" value="C:photosystem II"/>
    <property type="evidence" value="ECO:0007669"/>
    <property type="project" value="UniProtKB-KW"/>
</dbReference>
<dbReference type="GO" id="GO:0016168">
    <property type="term" value="F:chlorophyll binding"/>
    <property type="evidence" value="ECO:0007669"/>
    <property type="project" value="UniProtKB-UniRule"/>
</dbReference>
<dbReference type="GO" id="GO:0045156">
    <property type="term" value="F:electron transporter, transferring electrons within the cyclic electron transport pathway of photosynthesis activity"/>
    <property type="evidence" value="ECO:0007669"/>
    <property type="project" value="InterPro"/>
</dbReference>
<dbReference type="GO" id="GO:0005506">
    <property type="term" value="F:iron ion binding"/>
    <property type="evidence" value="ECO:0007669"/>
    <property type="project" value="UniProtKB-UniRule"/>
</dbReference>
<dbReference type="GO" id="GO:0016682">
    <property type="term" value="F:oxidoreductase activity, acting on diphenols and related substances as donors, oxygen as acceptor"/>
    <property type="evidence" value="ECO:0007669"/>
    <property type="project" value="UniProtKB-UniRule"/>
</dbReference>
<dbReference type="GO" id="GO:0010242">
    <property type="term" value="F:oxygen evolving activity"/>
    <property type="evidence" value="ECO:0007669"/>
    <property type="project" value="UniProtKB-EC"/>
</dbReference>
<dbReference type="GO" id="GO:0009772">
    <property type="term" value="P:photosynthetic electron transport in photosystem II"/>
    <property type="evidence" value="ECO:0007669"/>
    <property type="project" value="InterPro"/>
</dbReference>
<dbReference type="GO" id="GO:0009635">
    <property type="term" value="P:response to herbicide"/>
    <property type="evidence" value="ECO:0007669"/>
    <property type="project" value="UniProtKB-KW"/>
</dbReference>
<dbReference type="CDD" id="cd09289">
    <property type="entry name" value="Photosystem-II_D1"/>
    <property type="match status" value="1"/>
</dbReference>
<dbReference type="FunFam" id="1.20.85.10:FF:000002">
    <property type="entry name" value="Photosystem II protein D1"/>
    <property type="match status" value="1"/>
</dbReference>
<dbReference type="Gene3D" id="1.20.85.10">
    <property type="entry name" value="Photosystem II protein D1-like"/>
    <property type="match status" value="1"/>
</dbReference>
<dbReference type="HAMAP" id="MF_01379">
    <property type="entry name" value="PSII_PsbA_D1"/>
    <property type="match status" value="1"/>
</dbReference>
<dbReference type="InterPro" id="IPR055266">
    <property type="entry name" value="D1/D2"/>
</dbReference>
<dbReference type="InterPro" id="IPR036854">
    <property type="entry name" value="Photo_II_D1/D2_sf"/>
</dbReference>
<dbReference type="InterPro" id="IPR000484">
    <property type="entry name" value="Photo_RC_L/M"/>
</dbReference>
<dbReference type="InterPro" id="IPR055265">
    <property type="entry name" value="Photo_RC_L/M_CS"/>
</dbReference>
<dbReference type="InterPro" id="IPR005867">
    <property type="entry name" value="PSII_D1"/>
</dbReference>
<dbReference type="NCBIfam" id="TIGR01151">
    <property type="entry name" value="psbA"/>
    <property type="match status" value="1"/>
</dbReference>
<dbReference type="PANTHER" id="PTHR33149:SF12">
    <property type="entry name" value="PHOTOSYSTEM II D2 PROTEIN"/>
    <property type="match status" value="1"/>
</dbReference>
<dbReference type="PANTHER" id="PTHR33149">
    <property type="entry name" value="PHOTOSYSTEM II PROTEIN D1"/>
    <property type="match status" value="1"/>
</dbReference>
<dbReference type="Pfam" id="PF00124">
    <property type="entry name" value="Photo_RC"/>
    <property type="match status" value="1"/>
</dbReference>
<dbReference type="PRINTS" id="PR00256">
    <property type="entry name" value="REACTNCENTRE"/>
</dbReference>
<dbReference type="SUPFAM" id="SSF81483">
    <property type="entry name" value="Bacterial photosystem II reaction centre, L and M subunits"/>
    <property type="match status" value="1"/>
</dbReference>
<dbReference type="PROSITE" id="PS00244">
    <property type="entry name" value="REACTION_CENTER"/>
    <property type="match status" value="1"/>
</dbReference>
<evidence type="ECO:0000255" key="1">
    <source>
        <dbReference type="HAMAP-Rule" id="MF_01379"/>
    </source>
</evidence>
<evidence type="ECO:0000305" key="2"/>
<comment type="function">
    <text evidence="1">Photosystem II (PSII) is a light-driven water:plastoquinone oxidoreductase that uses light energy to abstract electrons from H(2)O, generating O(2) and a proton gradient subsequently used for ATP formation. It consists of a core antenna complex that captures photons, and an electron transfer chain that converts photonic excitation into a charge separation. The D1/D2 (PsbA/PsbD) reaction center heterodimer binds P680, the primary electron donor of PSII as well as several subsequent electron acceptors.</text>
</comment>
<comment type="catalytic activity">
    <reaction evidence="1">
        <text>2 a plastoquinone + 4 hnu + 2 H2O = 2 a plastoquinol + O2</text>
        <dbReference type="Rhea" id="RHEA:36359"/>
        <dbReference type="Rhea" id="RHEA-COMP:9561"/>
        <dbReference type="Rhea" id="RHEA-COMP:9562"/>
        <dbReference type="ChEBI" id="CHEBI:15377"/>
        <dbReference type="ChEBI" id="CHEBI:15379"/>
        <dbReference type="ChEBI" id="CHEBI:17757"/>
        <dbReference type="ChEBI" id="CHEBI:30212"/>
        <dbReference type="ChEBI" id="CHEBI:62192"/>
        <dbReference type="EC" id="1.10.3.9"/>
    </reaction>
</comment>
<comment type="cofactor">
    <text evidence="1">The D1/D2 heterodimer binds P680, chlorophylls that are the primary electron donor of PSII, and subsequent electron acceptors. It shares a non-heme iron and each subunit binds pheophytin, quinone, additional chlorophylls, carotenoids and lipids. D1 provides most of the ligands for the Mn4-Ca-O5 cluster of the oxygen-evolving complex (OEC). There is also a Cl(-1) ion associated with D1 and D2, which is required for oxygen evolution. The PSII complex binds additional chlorophylls, carotenoids and specific lipids.</text>
</comment>
<comment type="subunit">
    <text evidence="1">PSII is composed of 1 copy each of membrane proteins PsbA, PsbB, PsbC, PsbD, PsbE, PsbF, PsbH, PsbI, PsbJ, PsbK, PsbL, PsbM, PsbT, PsbX, PsbY, PsbZ, Psb30/Ycf12, at least 3 peripheral proteins of the oxygen-evolving complex and a large number of cofactors. It forms dimeric complexes.</text>
</comment>
<comment type="subcellular location">
    <subcellularLocation>
        <location evidence="2">Plastid membrane</location>
        <topology evidence="1">Multi-pass membrane protein</topology>
    </subcellularLocation>
</comment>
<comment type="PTM">
    <text evidence="1">Tyr-161 forms a radical intermediate that is referred to as redox-active TyrZ, YZ or Y-Z.</text>
</comment>
<comment type="PTM">
    <text evidence="1">C-terminally processed by CTPA; processing is essential to allow assembly of the oxygen-evolving complex and thus photosynthetic growth.</text>
</comment>
<comment type="miscellaneous">
    <text evidence="1">2 of the reaction center chlorophylls (ChlD1 and ChlD2) are entirely coordinated by water.</text>
</comment>
<comment type="miscellaneous">
    <text evidence="1">Herbicides such as atrazine, BNT, diuron or ioxynil bind in the Q(B) binding site and block subsequent electron transfer.</text>
</comment>
<comment type="similarity">
    <text evidence="1">Belongs to the reaction center PufL/M/PsbA/D family.</text>
</comment>
<comment type="caution">
    <text evidence="2">Young tissue from this organism is photosynthetic and contains some thylakoids, although the photosynthetic activity does not exceed the light compensation point.</text>
</comment>
<organism>
    <name type="scientific">Cuscuta reflexa</name>
    <name type="common">Southern Asian dodder</name>
    <dbReference type="NCBI Taxonomy" id="4129"/>
    <lineage>
        <taxon>Eukaryota</taxon>
        <taxon>Viridiplantae</taxon>
        <taxon>Streptophyta</taxon>
        <taxon>Embryophyta</taxon>
        <taxon>Tracheophyta</taxon>
        <taxon>Spermatophyta</taxon>
        <taxon>Magnoliopsida</taxon>
        <taxon>eudicotyledons</taxon>
        <taxon>Gunneridae</taxon>
        <taxon>Pentapetalae</taxon>
        <taxon>asterids</taxon>
        <taxon>lamiids</taxon>
        <taxon>Solanales</taxon>
        <taxon>Convolvulaceae</taxon>
        <taxon>Cuscuteae</taxon>
        <taxon>Cuscuta</taxon>
        <taxon>Cuscuta subgen. Monogynella</taxon>
    </lineage>
</organism>
<reference key="1">
    <citation type="journal article" date="1993" name="Curr. Genet.">
        <title>A large deletion in the plastid DNA of the holoparasitic flowering plant Cuscuta reflexa concerning two ribosomal proteins (rpl2, rpl23), one transfer RNA (trnI) and an ORF 2280 homologue.</title>
        <authorList>
            <person name="Boemmer D."/>
            <person name="Haberhausen G."/>
            <person name="Zetsche K."/>
        </authorList>
    </citation>
    <scope>NUCLEOTIDE SEQUENCE [GENOMIC DNA]</scope>
</reference>
<reference key="2">
    <citation type="journal article" date="2007" name="BMC Plant Biol.">
        <title>Complete DNA sequences of the plastid genomes of two parasitic flowering plant species, Cuscuta reflexa and Cuscuta gronovii.</title>
        <authorList>
            <person name="Funk H.T."/>
            <person name="Berg S."/>
            <person name="Krupinska K."/>
            <person name="Maier U.-G."/>
            <person name="Krause K."/>
        </authorList>
    </citation>
    <scope>NUCLEOTIDE SEQUENCE [LARGE SCALE GENOMIC DNA]</scope>
</reference>
<gene>
    <name evidence="1" type="primary">psbA</name>
</gene>
<protein>
    <recommendedName>
        <fullName evidence="1">Photosystem II protein D1</fullName>
        <shortName evidence="1">PSII D1 protein</shortName>
        <ecNumber evidence="1">1.10.3.9</ecNumber>
    </recommendedName>
    <alternativeName>
        <fullName evidence="1">Photosystem II Q(B) protein</fullName>
    </alternativeName>
</protein>
<feature type="initiator methionine" description="Removed" evidence="1">
    <location>
        <position position="1"/>
    </location>
</feature>
<feature type="chain" id="PRO_0000090435" description="Photosystem II protein D1" evidence="1">
    <location>
        <begin position="2"/>
        <end position="344"/>
    </location>
</feature>
<feature type="propeptide" id="PRO_0000316450" evidence="1">
    <location>
        <begin position="345"/>
        <end position="353"/>
    </location>
</feature>
<feature type="transmembrane region" description="Helical" evidence="1">
    <location>
        <begin position="29"/>
        <end position="46"/>
    </location>
</feature>
<feature type="transmembrane region" description="Helical" evidence="1">
    <location>
        <begin position="118"/>
        <end position="133"/>
    </location>
</feature>
<feature type="transmembrane region" description="Helical" evidence="1">
    <location>
        <begin position="142"/>
        <end position="156"/>
    </location>
</feature>
<feature type="transmembrane region" description="Helical" evidence="1">
    <location>
        <begin position="197"/>
        <end position="218"/>
    </location>
</feature>
<feature type="transmembrane region" description="Helical" evidence="1">
    <location>
        <begin position="274"/>
        <end position="288"/>
    </location>
</feature>
<feature type="binding site" description="axial binding residue" evidence="1">
    <location>
        <position position="118"/>
    </location>
    <ligand>
        <name>chlorophyll a</name>
        <dbReference type="ChEBI" id="CHEBI:58416"/>
        <label>ChlzD1</label>
    </ligand>
    <ligandPart>
        <name>Mg</name>
        <dbReference type="ChEBI" id="CHEBI:25107"/>
    </ligandPart>
</feature>
<feature type="binding site" evidence="1">
    <location>
        <position position="126"/>
    </location>
    <ligand>
        <name>pheophytin a</name>
        <dbReference type="ChEBI" id="CHEBI:136840"/>
        <label>D1</label>
    </ligand>
</feature>
<feature type="binding site" evidence="1">
    <location>
        <position position="170"/>
    </location>
    <ligand>
        <name>[CaMn4O5] cluster</name>
        <dbReference type="ChEBI" id="CHEBI:189552"/>
    </ligand>
</feature>
<feature type="binding site" evidence="1">
    <location>
        <position position="189"/>
    </location>
    <ligand>
        <name>[CaMn4O5] cluster</name>
        <dbReference type="ChEBI" id="CHEBI:189552"/>
    </ligand>
</feature>
<feature type="binding site" description="axial binding residue" evidence="1">
    <location>
        <position position="198"/>
    </location>
    <ligand>
        <name>chlorophyll a</name>
        <dbReference type="ChEBI" id="CHEBI:58416"/>
        <label>PD1</label>
    </ligand>
    <ligandPart>
        <name>Mg</name>
        <dbReference type="ChEBI" id="CHEBI:25107"/>
    </ligandPart>
</feature>
<feature type="binding site" evidence="1">
    <location>
        <position position="215"/>
    </location>
    <ligand>
        <name>a quinone</name>
        <dbReference type="ChEBI" id="CHEBI:132124"/>
        <label>B</label>
    </ligand>
</feature>
<feature type="binding site" evidence="1">
    <location>
        <position position="215"/>
    </location>
    <ligand>
        <name>Fe cation</name>
        <dbReference type="ChEBI" id="CHEBI:24875"/>
        <note>ligand shared with heterodimeric partner</note>
    </ligand>
</feature>
<feature type="binding site" evidence="1">
    <location>
        <begin position="264"/>
        <end position="265"/>
    </location>
    <ligand>
        <name>a quinone</name>
        <dbReference type="ChEBI" id="CHEBI:132124"/>
        <label>B</label>
    </ligand>
</feature>
<feature type="binding site" evidence="1">
    <location>
        <position position="272"/>
    </location>
    <ligand>
        <name>Fe cation</name>
        <dbReference type="ChEBI" id="CHEBI:24875"/>
        <note>ligand shared with heterodimeric partner</note>
    </ligand>
</feature>
<feature type="binding site" evidence="1">
    <location>
        <position position="332"/>
    </location>
    <ligand>
        <name>[CaMn4O5] cluster</name>
        <dbReference type="ChEBI" id="CHEBI:189552"/>
    </ligand>
</feature>
<feature type="binding site" evidence="1">
    <location>
        <position position="333"/>
    </location>
    <ligand>
        <name>[CaMn4O5] cluster</name>
        <dbReference type="ChEBI" id="CHEBI:189552"/>
    </ligand>
</feature>
<feature type="binding site" evidence="1">
    <location>
        <position position="342"/>
    </location>
    <ligand>
        <name>[CaMn4O5] cluster</name>
        <dbReference type="ChEBI" id="CHEBI:189552"/>
    </ligand>
</feature>
<feature type="binding site" evidence="1">
    <location>
        <position position="344"/>
    </location>
    <ligand>
        <name>[CaMn4O5] cluster</name>
        <dbReference type="ChEBI" id="CHEBI:189552"/>
    </ligand>
</feature>
<feature type="site" description="Tyrosine radical intermediate" evidence="1">
    <location>
        <position position="161"/>
    </location>
</feature>
<feature type="site" description="Stabilizes free radical intermediate" evidence="1">
    <location>
        <position position="190"/>
    </location>
</feature>
<feature type="site" description="Cleavage; by CTPA" evidence="1">
    <location>
        <begin position="344"/>
        <end position="345"/>
    </location>
</feature>
<feature type="modified residue" description="N-acetylthreonine" evidence="1">
    <location>
        <position position="2"/>
    </location>
</feature>
<feature type="modified residue" description="Phosphothreonine" evidence="1">
    <location>
        <position position="2"/>
    </location>
</feature>
<sequence>MTAILERRESESLWGRFCNWITSTENRLYIGWFGVLMIPTLLTATSVFIIAFIAAPPVDIDGIREPVSGSLLYGNNIVSGAIIPTSAAIGLHFYPIWEAASVDEWLYNGGPYELIVLHFLLGVACYMGREWELSFRLGMRPWIAVAYSAPVAAATAVFLIYPIGQGSFSDGMPLGISGTFNFMIVFQAEHNILMHPFHMLGVAGVFGGSLFSAMHGSLVTSSLIRETTENESANEGYRFGQEEETYNIVAAHGYFGRLIFQYASFNNSRSLHFFLAAWPVVGIWFTALGISTMAFNLNGFNFNQSVVDSQGRVINTWADIINRANLGMEVMHERNAHNFPLDLAAIEAPATNG</sequence>
<accession>P32036</accession>
<accession>A7M947</accession>
<keyword id="KW-0007">Acetylation</keyword>
<keyword id="KW-0106">Calcium</keyword>
<keyword id="KW-0148">Chlorophyll</keyword>
<keyword id="KW-0157">Chromophore</keyword>
<keyword id="KW-0249">Electron transport</keyword>
<keyword id="KW-0359">Herbicide resistance</keyword>
<keyword id="KW-0408">Iron</keyword>
<keyword id="KW-0460">Magnesium</keyword>
<keyword id="KW-0464">Manganese</keyword>
<keyword id="KW-0472">Membrane</keyword>
<keyword id="KW-0479">Metal-binding</keyword>
<keyword id="KW-0560">Oxidoreductase</keyword>
<keyword id="KW-0597">Phosphoprotein</keyword>
<keyword id="KW-0602">Photosynthesis</keyword>
<keyword id="KW-0604">Photosystem II</keyword>
<keyword id="KW-0934">Plastid</keyword>
<keyword id="KW-0812">Transmembrane</keyword>
<keyword id="KW-1133">Transmembrane helix</keyword>
<keyword id="KW-0813">Transport</keyword>
<proteinExistence type="inferred from homology"/>